<comment type="subcellular location">
    <subcellularLocation>
        <location evidence="2">Secreted</location>
    </subcellularLocation>
</comment>
<comment type="domain">
    <text evidence="2">The presence of a 'disulfide through disulfide knot' structurally defines this protein as a knottin.</text>
</comment>
<comment type="similarity">
    <text evidence="2">Belongs to the UPF0499 family.</text>
</comment>
<dbReference type="EMBL" id="CH476602">
    <property type="protein sequence ID" value="EAU33237.1"/>
    <property type="molecule type" value="Genomic_DNA"/>
</dbReference>
<dbReference type="RefSeq" id="XP_001215871.1">
    <property type="nucleotide sequence ID" value="XM_001215871.1"/>
</dbReference>
<dbReference type="EnsemblFungi" id="EAU33237">
    <property type="protein sequence ID" value="EAU33237"/>
    <property type="gene ID" value="ATEG_06693"/>
</dbReference>
<dbReference type="GeneID" id="4321970"/>
<dbReference type="VEuPathDB" id="FungiDB:ATEG_06693"/>
<dbReference type="HOGENOM" id="CLU_2096408_0_0_1"/>
<dbReference type="Proteomes" id="UP000007963">
    <property type="component" value="Unassembled WGS sequence"/>
</dbReference>
<dbReference type="GO" id="GO:0005576">
    <property type="term" value="C:extracellular region"/>
    <property type="evidence" value="ECO:0007669"/>
    <property type="project" value="UniProtKB-SubCell"/>
</dbReference>
<reference key="1">
    <citation type="submission" date="2005-09" db="EMBL/GenBank/DDBJ databases">
        <title>Annotation of the Aspergillus terreus NIH2624 genome.</title>
        <authorList>
            <person name="Birren B.W."/>
            <person name="Lander E.S."/>
            <person name="Galagan J.E."/>
            <person name="Nusbaum C."/>
            <person name="Devon K."/>
            <person name="Henn M."/>
            <person name="Ma L.-J."/>
            <person name="Jaffe D.B."/>
            <person name="Butler J."/>
            <person name="Alvarez P."/>
            <person name="Gnerre S."/>
            <person name="Grabherr M."/>
            <person name="Kleber M."/>
            <person name="Mauceli E.W."/>
            <person name="Brockman W."/>
            <person name="Rounsley S."/>
            <person name="Young S.K."/>
            <person name="LaButti K."/>
            <person name="Pushparaj V."/>
            <person name="DeCaprio D."/>
            <person name="Crawford M."/>
            <person name="Koehrsen M."/>
            <person name="Engels R."/>
            <person name="Montgomery P."/>
            <person name="Pearson M."/>
            <person name="Howarth C."/>
            <person name="Larson L."/>
            <person name="Luoma S."/>
            <person name="White J."/>
            <person name="Alvarado L."/>
            <person name="Kodira C.D."/>
            <person name="Zeng Q."/>
            <person name="Oleary S."/>
            <person name="Yandava C."/>
            <person name="Denning D.W."/>
            <person name="Nierman W.C."/>
            <person name="Milne T."/>
            <person name="Madden K."/>
        </authorList>
    </citation>
    <scope>NUCLEOTIDE SEQUENCE [LARGE SCALE GENOMIC DNA]</scope>
    <source>
        <strain>NIH 2624 / FGSC A1156</strain>
    </source>
</reference>
<gene>
    <name type="ORF">ATEG_06693</name>
</gene>
<proteinExistence type="inferred from homology"/>
<organism>
    <name type="scientific">Aspergillus terreus (strain NIH 2624 / FGSC A1156)</name>
    <dbReference type="NCBI Taxonomy" id="341663"/>
    <lineage>
        <taxon>Eukaryota</taxon>
        <taxon>Fungi</taxon>
        <taxon>Dikarya</taxon>
        <taxon>Ascomycota</taxon>
        <taxon>Pezizomycotina</taxon>
        <taxon>Eurotiomycetes</taxon>
        <taxon>Eurotiomycetidae</taxon>
        <taxon>Eurotiales</taxon>
        <taxon>Aspergillaceae</taxon>
        <taxon>Aspergillus</taxon>
        <taxon>Aspergillus subgen. Circumdati</taxon>
    </lineage>
</organism>
<sequence>MKLTGLLSLALLTTLALAAPDPKKNGPNRDWCGQVCTGKNDCSGECNKCVNFVCKRTSVLIYKEYLHKNATDHAARLNATRHLTIMIDETTRVDHVTVKFNVETYGMESITRRPEA</sequence>
<evidence type="ECO:0000255" key="1"/>
<evidence type="ECO:0000305" key="2"/>
<accession>Q0CHZ1</accession>
<protein>
    <recommendedName>
        <fullName>UPF0499 protein ATEG_06693</fullName>
    </recommendedName>
</protein>
<name>U499_ASPTN</name>
<keyword id="KW-1015">Disulfide bond</keyword>
<keyword id="KW-0960">Knottin</keyword>
<keyword id="KW-1185">Reference proteome</keyword>
<keyword id="KW-0964">Secreted</keyword>
<keyword id="KW-0732">Signal</keyword>
<feature type="signal peptide" evidence="1">
    <location>
        <begin position="1"/>
        <end position="18"/>
    </location>
</feature>
<feature type="chain" id="PRO_0000307901" description="UPF0499 protein ATEG_06693">
    <location>
        <begin position="19"/>
        <end position="116"/>
    </location>
</feature>
<feature type="disulfide bond" evidence="2">
    <location>
        <begin position="32"/>
        <end position="46"/>
    </location>
</feature>
<feature type="disulfide bond" evidence="2">
    <location>
        <begin position="36"/>
        <end position="49"/>
    </location>
</feature>
<feature type="disulfide bond" evidence="2">
    <location>
        <begin position="42"/>
        <end position="54"/>
    </location>
</feature>